<feature type="signal peptide" evidence="2">
    <location>
        <begin position="1"/>
        <end position="18"/>
    </location>
</feature>
<feature type="chain" id="PRO_0000031731" description="Ribose import binding protein RbsB">
    <location>
        <begin position="19"/>
        <end position="305"/>
    </location>
</feature>
<feature type="lipid moiety-binding region" description="N-palmitoyl cysteine" evidence="5">
    <location>
        <position position="19"/>
    </location>
</feature>
<feature type="lipid moiety-binding region" description="S-diacylglycerol cysteine" evidence="5">
    <location>
        <position position="19"/>
    </location>
</feature>
<feature type="sequence conflict" description="In Ref. 3; CAA81053." evidence="5" ref="3">
    <original>QWAKP</original>
    <variation>NGKR</variation>
    <location>
        <begin position="25"/>
        <end position="29"/>
    </location>
</feature>
<reference key="1">
    <citation type="journal article" date="1997" name="Microbiology">
        <title>The Bacillus subtilis genome from gerBC (311 degrees) to licR (334 degrees).</title>
        <authorList>
            <person name="Presecan E."/>
            <person name="Moszer I."/>
            <person name="Boursier L."/>
            <person name="Cruz Ramos H."/>
            <person name="De La Fuente V."/>
            <person name="Hullo M.-F."/>
            <person name="Lelong C."/>
            <person name="Schleich S."/>
            <person name="Sekowska A."/>
            <person name="Song B.H."/>
            <person name="Villani G."/>
            <person name="Kunst F."/>
            <person name="Danchin A."/>
            <person name="Glaser P."/>
        </authorList>
    </citation>
    <scope>NUCLEOTIDE SEQUENCE [GENOMIC DNA]</scope>
    <source>
        <strain>168</strain>
    </source>
</reference>
<reference key="2">
    <citation type="journal article" date="1997" name="Nature">
        <title>The complete genome sequence of the Gram-positive bacterium Bacillus subtilis.</title>
        <authorList>
            <person name="Kunst F."/>
            <person name="Ogasawara N."/>
            <person name="Moszer I."/>
            <person name="Albertini A.M."/>
            <person name="Alloni G."/>
            <person name="Azevedo V."/>
            <person name="Bertero M.G."/>
            <person name="Bessieres P."/>
            <person name="Bolotin A."/>
            <person name="Borchert S."/>
            <person name="Borriss R."/>
            <person name="Boursier L."/>
            <person name="Brans A."/>
            <person name="Braun M."/>
            <person name="Brignell S.C."/>
            <person name="Bron S."/>
            <person name="Brouillet S."/>
            <person name="Bruschi C.V."/>
            <person name="Caldwell B."/>
            <person name="Capuano V."/>
            <person name="Carter N.M."/>
            <person name="Choi S.-K."/>
            <person name="Codani J.-J."/>
            <person name="Connerton I.F."/>
            <person name="Cummings N.J."/>
            <person name="Daniel R.A."/>
            <person name="Denizot F."/>
            <person name="Devine K.M."/>
            <person name="Duesterhoeft A."/>
            <person name="Ehrlich S.D."/>
            <person name="Emmerson P.T."/>
            <person name="Entian K.-D."/>
            <person name="Errington J."/>
            <person name="Fabret C."/>
            <person name="Ferrari E."/>
            <person name="Foulger D."/>
            <person name="Fritz C."/>
            <person name="Fujita M."/>
            <person name="Fujita Y."/>
            <person name="Fuma S."/>
            <person name="Galizzi A."/>
            <person name="Galleron N."/>
            <person name="Ghim S.-Y."/>
            <person name="Glaser P."/>
            <person name="Goffeau A."/>
            <person name="Golightly E.J."/>
            <person name="Grandi G."/>
            <person name="Guiseppi G."/>
            <person name="Guy B.J."/>
            <person name="Haga K."/>
            <person name="Haiech J."/>
            <person name="Harwood C.R."/>
            <person name="Henaut A."/>
            <person name="Hilbert H."/>
            <person name="Holsappel S."/>
            <person name="Hosono S."/>
            <person name="Hullo M.-F."/>
            <person name="Itaya M."/>
            <person name="Jones L.-M."/>
            <person name="Joris B."/>
            <person name="Karamata D."/>
            <person name="Kasahara Y."/>
            <person name="Klaerr-Blanchard M."/>
            <person name="Klein C."/>
            <person name="Kobayashi Y."/>
            <person name="Koetter P."/>
            <person name="Koningstein G."/>
            <person name="Krogh S."/>
            <person name="Kumano M."/>
            <person name="Kurita K."/>
            <person name="Lapidus A."/>
            <person name="Lardinois S."/>
            <person name="Lauber J."/>
            <person name="Lazarevic V."/>
            <person name="Lee S.-M."/>
            <person name="Levine A."/>
            <person name="Liu H."/>
            <person name="Masuda S."/>
            <person name="Mauel C."/>
            <person name="Medigue C."/>
            <person name="Medina N."/>
            <person name="Mellado R.P."/>
            <person name="Mizuno M."/>
            <person name="Moestl D."/>
            <person name="Nakai S."/>
            <person name="Noback M."/>
            <person name="Noone D."/>
            <person name="O'Reilly M."/>
            <person name="Ogawa K."/>
            <person name="Ogiwara A."/>
            <person name="Oudega B."/>
            <person name="Park S.-H."/>
            <person name="Parro V."/>
            <person name="Pohl T.M."/>
            <person name="Portetelle D."/>
            <person name="Porwollik S."/>
            <person name="Prescott A.M."/>
            <person name="Presecan E."/>
            <person name="Pujic P."/>
            <person name="Purnelle B."/>
            <person name="Rapoport G."/>
            <person name="Rey M."/>
            <person name="Reynolds S."/>
            <person name="Rieger M."/>
            <person name="Rivolta C."/>
            <person name="Rocha E."/>
            <person name="Roche B."/>
            <person name="Rose M."/>
            <person name="Sadaie Y."/>
            <person name="Sato T."/>
            <person name="Scanlan E."/>
            <person name="Schleich S."/>
            <person name="Schroeter R."/>
            <person name="Scoffone F."/>
            <person name="Sekiguchi J."/>
            <person name="Sekowska A."/>
            <person name="Seror S.J."/>
            <person name="Serror P."/>
            <person name="Shin B.-S."/>
            <person name="Soldo B."/>
            <person name="Sorokin A."/>
            <person name="Tacconi E."/>
            <person name="Takagi T."/>
            <person name="Takahashi H."/>
            <person name="Takemaru K."/>
            <person name="Takeuchi M."/>
            <person name="Tamakoshi A."/>
            <person name="Tanaka T."/>
            <person name="Terpstra P."/>
            <person name="Tognoni A."/>
            <person name="Tosato V."/>
            <person name="Uchiyama S."/>
            <person name="Vandenbol M."/>
            <person name="Vannier F."/>
            <person name="Vassarotti A."/>
            <person name="Viari A."/>
            <person name="Wambutt R."/>
            <person name="Wedler E."/>
            <person name="Wedler H."/>
            <person name="Weitzenegger T."/>
            <person name="Winters P."/>
            <person name="Wipat A."/>
            <person name="Yamamoto H."/>
            <person name="Yamane K."/>
            <person name="Yasumoto K."/>
            <person name="Yata K."/>
            <person name="Yoshida K."/>
            <person name="Yoshikawa H.-F."/>
            <person name="Zumstein E."/>
            <person name="Yoshikawa H."/>
            <person name="Danchin A."/>
        </authorList>
    </citation>
    <scope>NUCLEOTIDE SEQUENCE [LARGE SCALE GENOMIC DNA]</scope>
    <source>
        <strain>168</strain>
    </source>
</reference>
<reference key="3">
    <citation type="journal article" date="1994" name="Microbiology">
        <title>Analysis of a ribose transport operon from Bacillus subtilis.</title>
        <authorList>
            <person name="Woodson K."/>
            <person name="Devine K.M."/>
        </authorList>
    </citation>
    <scope>NUCLEOTIDE SEQUENCE [GENOMIC DNA] OF 1-213</scope>
    <source>
        <strain>168</strain>
    </source>
</reference>
<reference key="4">
    <citation type="journal article" date="2012" name="Mol. Microbiol.">
        <title>The biofilm formation defect of a Bacillus subtilis flotillin-defective mutant involves the protease FtsH.</title>
        <authorList>
            <person name="Yepes A."/>
            <person name="Schneider J."/>
            <person name="Mielich B."/>
            <person name="Koch G."/>
            <person name="Garcia-Betancur J.C."/>
            <person name="Ramamurthi K.S."/>
            <person name="Vlamakis H."/>
            <person name="Lopez D."/>
        </authorList>
    </citation>
    <scope>IDENTIFICATION BY MASS SPECTROMETRY</scope>
    <scope>SUBCELLULAR LOCATION</scope>
    <source>
        <strain>168 / Marburg / ATCC 6051 / DSM 10 / JCM 1465 / NBRC 13719 / NCIMB 3610 / NRRL NRS-744 / VKM B-501</strain>
    </source>
</reference>
<reference key="5">
    <citation type="journal article" date="2013" name="Mol. Microbiol.">
        <title>Flotillins functionally organize the bacterial membrane.</title>
        <authorList>
            <person name="Bach J.N."/>
            <person name="Bramkamp M."/>
        </authorList>
    </citation>
    <scope>INTERACTION WITH FLOT</scope>
    <scope>SUBCELLULAR LOCATION</scope>
    <source>
        <strain>168</strain>
    </source>
</reference>
<keyword id="KW-1003">Cell membrane</keyword>
<keyword id="KW-0449">Lipoprotein</keyword>
<keyword id="KW-0472">Membrane</keyword>
<keyword id="KW-0564">Palmitate</keyword>
<keyword id="KW-1185">Reference proteome</keyword>
<keyword id="KW-0732">Signal</keyword>
<keyword id="KW-0762">Sugar transport</keyword>
<keyword id="KW-0813">Transport</keyword>
<evidence type="ECO:0000250" key="1">
    <source>
        <dbReference type="UniProtKB" id="P02925"/>
    </source>
</evidence>
<evidence type="ECO:0000255" key="2">
    <source>
        <dbReference type="PROSITE-ProRule" id="PRU00303"/>
    </source>
</evidence>
<evidence type="ECO:0000269" key="3">
    <source>
    </source>
</evidence>
<evidence type="ECO:0000269" key="4">
    <source>
    </source>
</evidence>
<evidence type="ECO:0000305" key="5"/>
<protein>
    <recommendedName>
        <fullName evidence="1">Ribose import binding protein RbsB</fullName>
    </recommendedName>
</protein>
<gene>
    <name type="primary">rbsB</name>
    <name type="ordered locus">BSU35960</name>
</gene>
<comment type="function">
    <text evidence="1">Part of the ABC transporter complex RbsABC involved in ribose import. Binds ribose.</text>
</comment>
<comment type="subunit">
    <text evidence="1 4">The complex is composed of an ATP-binding protein (RbsA), two transmembrane proteins (RbsC) and a solute-binding protein (RbsB) (By similarity). Interacts with FloT (PubMed:23651456).</text>
</comment>
<comment type="subcellular location">
    <subcellularLocation>
        <location evidence="3 4">Cell membrane</location>
        <topology evidence="5">Lipid-anchor</topology>
    </subcellularLocation>
    <subcellularLocation>
        <location evidence="3 4">Membrane raft</location>
        <topology>Lipid-anchor</topology>
    </subcellularLocation>
    <text evidence="3 4">Present in detergent-resistant membrane (DRM) fractions that may be equivalent to eukaryotic membrane rafts; these rafts include proteins involved in signaling, molecule trafficking and protein secretion.</text>
</comment>
<comment type="similarity">
    <text evidence="5">Belongs to the bacterial solute-binding protein 2 family.</text>
</comment>
<sequence>MKKAVSVILTLSLFLLTACSLEPPQWAKPSNSGNKKEFTIGLSVSTLNNPFFVSLKKGIEKEAKKRGMKVIIVDAQNDSSKQTSDVEDLIQQGVDALLINPTDSSAISTAVESANAVGVPVVTIDRSAEQGKVETLVASDNVKGGEMAAAFIADKLGKGAKVAELEGVPGASATRERGSGFHNIADQKLQVVTKQSADFDRTKGLTVMENLLQGHPDIQAVFAHNDEMALGALEAINSSGKDILVIGFDGNKDALASIKDRKLSATVAQQPELIGKLATEAADDILHGKKVQKTISAPLKLETQK</sequence>
<name>RBSB_BACSU</name>
<organism>
    <name type="scientific">Bacillus subtilis (strain 168)</name>
    <dbReference type="NCBI Taxonomy" id="224308"/>
    <lineage>
        <taxon>Bacteria</taxon>
        <taxon>Bacillati</taxon>
        <taxon>Bacillota</taxon>
        <taxon>Bacilli</taxon>
        <taxon>Bacillales</taxon>
        <taxon>Bacillaceae</taxon>
        <taxon>Bacillus</taxon>
    </lineage>
</organism>
<accession>P36949</accession>
<accession>P96730</accession>
<dbReference type="EMBL" id="Z92953">
    <property type="protein sequence ID" value="CAB07461.1"/>
    <property type="molecule type" value="Genomic_DNA"/>
</dbReference>
<dbReference type="EMBL" id="AL009126">
    <property type="protein sequence ID" value="CAB15613.1"/>
    <property type="molecule type" value="Genomic_DNA"/>
</dbReference>
<dbReference type="EMBL" id="Z25798">
    <property type="protein sequence ID" value="CAA81053.1"/>
    <property type="molecule type" value="Genomic_DNA"/>
</dbReference>
<dbReference type="PIR" id="A69690">
    <property type="entry name" value="A69690"/>
</dbReference>
<dbReference type="RefSeq" id="NP_391477.1">
    <property type="nucleotide sequence ID" value="NC_000964.3"/>
</dbReference>
<dbReference type="RefSeq" id="WP_003242760.1">
    <property type="nucleotide sequence ID" value="NZ_OZ025638.1"/>
</dbReference>
<dbReference type="SMR" id="P36949"/>
<dbReference type="FunCoup" id="P36949">
    <property type="interactions" value="256"/>
</dbReference>
<dbReference type="IntAct" id="P36949">
    <property type="interactions" value="1"/>
</dbReference>
<dbReference type="STRING" id="224308.BSU35960"/>
<dbReference type="jPOST" id="P36949"/>
<dbReference type="PaxDb" id="224308-BSU35960"/>
<dbReference type="EnsemblBacteria" id="CAB15613">
    <property type="protein sequence ID" value="CAB15613"/>
    <property type="gene ID" value="BSU_35960"/>
</dbReference>
<dbReference type="GeneID" id="936848"/>
<dbReference type="KEGG" id="bsu:BSU35960"/>
<dbReference type="PATRIC" id="fig|224308.179.peg.3893"/>
<dbReference type="eggNOG" id="COG1879">
    <property type="taxonomic scope" value="Bacteria"/>
</dbReference>
<dbReference type="InParanoid" id="P36949"/>
<dbReference type="OrthoDB" id="9814427at2"/>
<dbReference type="PhylomeDB" id="P36949"/>
<dbReference type="BioCyc" id="BSUB:BSU35960-MONOMER"/>
<dbReference type="Proteomes" id="UP000001570">
    <property type="component" value="Chromosome"/>
</dbReference>
<dbReference type="GO" id="GO:0045121">
    <property type="term" value="C:membrane raft"/>
    <property type="evidence" value="ECO:0007669"/>
    <property type="project" value="UniProtKB-SubCell"/>
</dbReference>
<dbReference type="GO" id="GO:0030288">
    <property type="term" value="C:outer membrane-bounded periplasmic space"/>
    <property type="evidence" value="ECO:0000318"/>
    <property type="project" value="GO_Central"/>
</dbReference>
<dbReference type="GO" id="GO:0005886">
    <property type="term" value="C:plasma membrane"/>
    <property type="evidence" value="ECO:0007669"/>
    <property type="project" value="UniProtKB-SubCell"/>
</dbReference>
<dbReference type="GO" id="GO:0048029">
    <property type="term" value="F:monosaccharide binding"/>
    <property type="evidence" value="ECO:0000318"/>
    <property type="project" value="GO_Central"/>
</dbReference>
<dbReference type="GO" id="GO:0055085">
    <property type="term" value="P:transmembrane transport"/>
    <property type="evidence" value="ECO:0000318"/>
    <property type="project" value="GO_Central"/>
</dbReference>
<dbReference type="CDD" id="cd06323">
    <property type="entry name" value="PBP1_ribose_binding"/>
    <property type="match status" value="1"/>
</dbReference>
<dbReference type="Gene3D" id="3.40.50.2300">
    <property type="match status" value="2"/>
</dbReference>
<dbReference type="InterPro" id="IPR028082">
    <property type="entry name" value="Peripla_BP_I"/>
</dbReference>
<dbReference type="InterPro" id="IPR025997">
    <property type="entry name" value="SBP_2_dom"/>
</dbReference>
<dbReference type="NCBIfam" id="NF007936">
    <property type="entry name" value="PRK10653.1"/>
    <property type="match status" value="1"/>
</dbReference>
<dbReference type="PANTHER" id="PTHR46847">
    <property type="entry name" value="D-ALLOSE-BINDING PERIPLASMIC PROTEIN-RELATED"/>
    <property type="match status" value="1"/>
</dbReference>
<dbReference type="PANTHER" id="PTHR46847:SF1">
    <property type="entry name" value="D-ALLOSE-BINDING PERIPLASMIC PROTEIN-RELATED"/>
    <property type="match status" value="1"/>
</dbReference>
<dbReference type="Pfam" id="PF13407">
    <property type="entry name" value="Peripla_BP_4"/>
    <property type="match status" value="1"/>
</dbReference>
<dbReference type="SUPFAM" id="SSF53822">
    <property type="entry name" value="Periplasmic binding protein-like I"/>
    <property type="match status" value="1"/>
</dbReference>
<dbReference type="PROSITE" id="PS51257">
    <property type="entry name" value="PROKAR_LIPOPROTEIN"/>
    <property type="match status" value="1"/>
</dbReference>
<proteinExistence type="evidence at protein level"/>